<keyword id="KW-0007">Acetylation</keyword>
<keyword id="KW-0025">Alternative splicing</keyword>
<keyword id="KW-0966">Cell projection</keyword>
<keyword id="KW-0963">Cytoplasm</keyword>
<keyword id="KW-0217">Developmental protein</keyword>
<keyword id="KW-0221">Differentiation</keyword>
<keyword id="KW-0524">Neurogenesis</keyword>
<keyword id="KW-0597">Phosphoprotein</keyword>
<keyword id="KW-1185">Reference proteome</keyword>
<keyword id="KW-0043">Tumor suppressor</keyword>
<keyword id="KW-0879">Wnt signaling pathway</keyword>
<dbReference type="EMBL" id="CR858602">
    <property type="protein sequence ID" value="CAH90824.1"/>
    <property type="molecule type" value="mRNA"/>
</dbReference>
<dbReference type="EMBL" id="CR860373">
    <property type="protein sequence ID" value="CAH92501.1"/>
    <property type="molecule type" value="mRNA"/>
</dbReference>
<dbReference type="EMBL" id="CR860599">
    <property type="protein sequence ID" value="CAH92721.1"/>
    <property type="molecule type" value="mRNA"/>
</dbReference>
<dbReference type="RefSeq" id="NP_001127578.1">
    <molecule id="Q5RBN6-2"/>
    <property type="nucleotide sequence ID" value="NM_001134106.2"/>
</dbReference>
<dbReference type="RefSeq" id="NP_001128787.2">
    <molecule id="Q5RBN6-1"/>
    <property type="nucleotide sequence ID" value="NM_001135315.2"/>
</dbReference>
<dbReference type="RefSeq" id="NP_001417696.1">
    <molecule id="Q5RBN6-1"/>
    <property type="nucleotide sequence ID" value="NM_001430767.1"/>
</dbReference>
<dbReference type="RefSeq" id="XP_009247115.1">
    <property type="nucleotide sequence ID" value="XM_009248840.1"/>
</dbReference>
<dbReference type="RefSeq" id="XP_009247116.1">
    <property type="nucleotide sequence ID" value="XM_009248841.1"/>
</dbReference>
<dbReference type="RefSeq" id="XP_009247117.1">
    <property type="nucleotide sequence ID" value="XM_009248842.1"/>
</dbReference>
<dbReference type="RefSeq" id="XP_009247119.1">
    <property type="nucleotide sequence ID" value="XM_009248844.1"/>
</dbReference>
<dbReference type="RefSeq" id="XP_009247120.1">
    <property type="nucleotide sequence ID" value="XM_009248845.1"/>
</dbReference>
<dbReference type="RefSeq" id="XP_009247121.1">
    <property type="nucleotide sequence ID" value="XM_009248846.1"/>
</dbReference>
<dbReference type="RefSeq" id="XP_009247122.1">
    <property type="nucleotide sequence ID" value="XM_009248847.1"/>
</dbReference>
<dbReference type="RefSeq" id="XP_009247123.1">
    <property type="nucleotide sequence ID" value="XM_009248848.1"/>
</dbReference>
<dbReference type="RefSeq" id="XP_009247124.1">
    <property type="nucleotide sequence ID" value="XM_009248849.1"/>
</dbReference>
<dbReference type="RefSeq" id="XP_063571353.1">
    <molecule id="Q5RBN6-1"/>
    <property type="nucleotide sequence ID" value="XM_063715283.1"/>
</dbReference>
<dbReference type="RefSeq" id="XP_063571355.1">
    <molecule id="Q5RBN6-1"/>
    <property type="nucleotide sequence ID" value="XM_063715285.1"/>
</dbReference>
<dbReference type="RefSeq" id="XP_063571356.1">
    <molecule id="Q5RBN6-1"/>
    <property type="nucleotide sequence ID" value="XM_063715286.1"/>
</dbReference>
<dbReference type="RefSeq" id="XP_063571357.1">
    <molecule id="Q5RBN6-2"/>
    <property type="nucleotide sequence ID" value="XM_063715287.1"/>
</dbReference>
<dbReference type="RefSeq" id="XP_063571358.1">
    <molecule id="Q5RBN6-2"/>
    <property type="nucleotide sequence ID" value="XM_063715288.1"/>
</dbReference>
<dbReference type="SMR" id="Q5RBN6"/>
<dbReference type="FunCoup" id="Q5RBN6">
    <property type="interactions" value="1035"/>
</dbReference>
<dbReference type="STRING" id="9601.ENSPPYP00000006352"/>
<dbReference type="ESTHER" id="ponab-ndrg2">
    <property type="family name" value="Ndr_family"/>
</dbReference>
<dbReference type="MEROPS" id="S33.989"/>
<dbReference type="Ensembl" id="ENSPPYT00000006607.3">
    <molecule id="Q5RBN6-1"/>
    <property type="protein sequence ID" value="ENSPPYP00000006352.3"/>
    <property type="gene ID" value="ENSPPYG00000005584.3"/>
</dbReference>
<dbReference type="GeneID" id="100174656"/>
<dbReference type="KEGG" id="pon:100174656"/>
<dbReference type="CTD" id="57447"/>
<dbReference type="eggNOG" id="KOG2931">
    <property type="taxonomic scope" value="Eukaryota"/>
</dbReference>
<dbReference type="GeneTree" id="ENSGT00950000182872"/>
<dbReference type="InParanoid" id="Q5RBN6"/>
<dbReference type="Proteomes" id="UP000001595">
    <property type="component" value="Chromosome 14"/>
</dbReference>
<dbReference type="GO" id="GO:0030426">
    <property type="term" value="C:growth cone"/>
    <property type="evidence" value="ECO:0007669"/>
    <property type="project" value="UniProtKB-SubCell"/>
</dbReference>
<dbReference type="GO" id="GO:0048471">
    <property type="term" value="C:perinuclear region of cytoplasm"/>
    <property type="evidence" value="ECO:0007669"/>
    <property type="project" value="UniProtKB-SubCell"/>
</dbReference>
<dbReference type="GO" id="GO:0030154">
    <property type="term" value="P:cell differentiation"/>
    <property type="evidence" value="ECO:0007669"/>
    <property type="project" value="UniProtKB-KW"/>
</dbReference>
<dbReference type="GO" id="GO:0007399">
    <property type="term" value="P:nervous system development"/>
    <property type="evidence" value="ECO:0007669"/>
    <property type="project" value="UniProtKB-KW"/>
</dbReference>
<dbReference type="GO" id="GO:0016055">
    <property type="term" value="P:Wnt signaling pathway"/>
    <property type="evidence" value="ECO:0007669"/>
    <property type="project" value="UniProtKB-KW"/>
</dbReference>
<dbReference type="FunFam" id="3.40.50.1820:FF:000034">
    <property type="entry name" value="NDRG2 isoform 1"/>
    <property type="match status" value="1"/>
</dbReference>
<dbReference type="Gene3D" id="3.40.50.1820">
    <property type="entry name" value="alpha/beta hydrolase"/>
    <property type="match status" value="1"/>
</dbReference>
<dbReference type="InterPro" id="IPR029058">
    <property type="entry name" value="AB_hydrolase_fold"/>
</dbReference>
<dbReference type="InterPro" id="IPR004142">
    <property type="entry name" value="NDRG"/>
</dbReference>
<dbReference type="PANTHER" id="PTHR11034">
    <property type="entry name" value="N-MYC DOWNSTREAM REGULATED"/>
    <property type="match status" value="1"/>
</dbReference>
<dbReference type="Pfam" id="PF03096">
    <property type="entry name" value="Ndr"/>
    <property type="match status" value="1"/>
</dbReference>
<dbReference type="SUPFAM" id="SSF53474">
    <property type="entry name" value="alpha/beta-Hydrolases"/>
    <property type="match status" value="1"/>
</dbReference>
<sequence length="371" mass="40770">MAELQEVQITEEKPLLPGQTPEAAKEAELAARILLDQGQTHSVETPYGSVTFTVYGTPKPKRPAILTYHDVGLNYKSCFQPLFQFEDMQEIIQNFVRVHVDAPGMEEGAPVFPLGYQYPSLDQLADMIPCVLQYLNFSTIIGVGVGAGAYILARYALNHPDTVEGLVLINIDPNAKGWMDWAAHKLTGLTSSIPEMILGHLFSQEELSGNSELIQKYRNIITHAPNLDNIELYWNSYNNRRDLNFERGGDITLKCPVMLVVGDQAPHEDAVVECNSKLDPTQTSFLKMADSGGQPQLTQPGKLTEAFKYFLQGMGYMASSCMTRLSRSRTASLTSAASVDGNRSRSRTLSQSSESGTLSSGPPGHTMEVSC</sequence>
<reference key="1">
    <citation type="submission" date="2004-11" db="EMBL/GenBank/DDBJ databases">
        <authorList>
            <consortium name="The German cDNA consortium"/>
        </authorList>
    </citation>
    <scope>NUCLEOTIDE SEQUENCE [LARGE SCALE MRNA] (ISOFORMS 1 AND 2)</scope>
    <source>
        <tissue>Brain cortex</tissue>
        <tissue>Liver</tissue>
    </source>
</reference>
<evidence type="ECO:0000250" key="1"/>
<evidence type="ECO:0000250" key="2">
    <source>
        <dbReference type="UniProtKB" id="Q9QYG0"/>
    </source>
</evidence>
<evidence type="ECO:0000250" key="3">
    <source>
        <dbReference type="UniProtKB" id="Q9UN36"/>
    </source>
</evidence>
<evidence type="ECO:0000256" key="4">
    <source>
        <dbReference type="SAM" id="MobiDB-lite"/>
    </source>
</evidence>
<evidence type="ECO:0000303" key="5">
    <source ref="1"/>
</evidence>
<evidence type="ECO:0000305" key="6"/>
<organism>
    <name type="scientific">Pongo abelii</name>
    <name type="common">Sumatran orangutan</name>
    <name type="synonym">Pongo pygmaeus abelii</name>
    <dbReference type="NCBI Taxonomy" id="9601"/>
    <lineage>
        <taxon>Eukaryota</taxon>
        <taxon>Metazoa</taxon>
        <taxon>Chordata</taxon>
        <taxon>Craniata</taxon>
        <taxon>Vertebrata</taxon>
        <taxon>Euteleostomi</taxon>
        <taxon>Mammalia</taxon>
        <taxon>Eutheria</taxon>
        <taxon>Euarchontoglires</taxon>
        <taxon>Primates</taxon>
        <taxon>Haplorrhini</taxon>
        <taxon>Catarrhini</taxon>
        <taxon>Hominidae</taxon>
        <taxon>Pongo</taxon>
    </lineage>
</organism>
<gene>
    <name type="primary">NDRG2</name>
</gene>
<proteinExistence type="evidence at transcript level"/>
<feature type="initiator methionine" description="Removed" evidence="3">
    <location>
        <position position="1"/>
    </location>
</feature>
<feature type="chain" id="PRO_0000441170" description="Protein NDRG2">
    <location>
        <begin position="2"/>
        <end position="371"/>
    </location>
</feature>
<feature type="region of interest" description="Disordered" evidence="4">
    <location>
        <begin position="1"/>
        <end position="21"/>
    </location>
</feature>
<feature type="region of interest" description="Disordered" evidence="4">
    <location>
        <begin position="334"/>
        <end position="371"/>
    </location>
</feature>
<feature type="compositionally biased region" description="Low complexity" evidence="4">
    <location>
        <begin position="347"/>
        <end position="361"/>
    </location>
</feature>
<feature type="modified residue" description="N-acetylalanine" evidence="3">
    <location>
        <position position="2"/>
    </location>
</feature>
<feature type="modified residue" description="Phosphothreonine" evidence="3">
    <location>
        <position position="20"/>
    </location>
</feature>
<feature type="modified residue" description="Phosphoserine" evidence="3">
    <location>
        <position position="326"/>
    </location>
</feature>
<feature type="modified residue" description="Phosphoserine" evidence="3">
    <location>
        <position position="328"/>
    </location>
</feature>
<feature type="modified residue" description="Phosphothreonine" evidence="2">
    <location>
        <position position="330"/>
    </location>
</feature>
<feature type="modified residue" description="Phosphoserine" evidence="2">
    <location>
        <position position="332"/>
    </location>
</feature>
<feature type="modified residue" description="Phosphothreonine" evidence="3">
    <location>
        <position position="334"/>
    </location>
</feature>
<feature type="modified residue" description="Phosphoserine" evidence="2">
    <location>
        <position position="335"/>
    </location>
</feature>
<feature type="modified residue" description="Phosphoserine" evidence="3">
    <location>
        <position position="338"/>
    </location>
</feature>
<feature type="modified residue" description="Phosphoserine" evidence="3">
    <location>
        <position position="344"/>
    </location>
</feature>
<feature type="modified residue" description="Phosphothreonine" evidence="2">
    <location>
        <position position="348"/>
    </location>
</feature>
<feature type="modified residue" description="Phosphoserine" evidence="2">
    <location>
        <position position="350"/>
    </location>
</feature>
<feature type="modified residue" description="Phosphoserine" evidence="2">
    <location>
        <position position="352"/>
    </location>
</feature>
<feature type="modified residue" description="Phosphoserine" evidence="2">
    <location>
        <position position="353"/>
    </location>
</feature>
<feature type="modified residue" description="Phosphoserine" evidence="2">
    <location>
        <position position="355"/>
    </location>
</feature>
<feature type="modified residue" description="Phosphothreonine" evidence="2">
    <location>
        <position position="357"/>
    </location>
</feature>
<feature type="modified residue" description="Phosphoserine" evidence="2">
    <location>
        <position position="370"/>
    </location>
</feature>
<feature type="splice variant" id="VSP_019031" description="In isoform 2." evidence="5">
    <location>
        <begin position="26"/>
        <end position="39"/>
    </location>
</feature>
<feature type="sequence conflict" description="In Ref. 1; CAH90824." evidence="6" ref="1">
    <original>G</original>
    <variation>D</variation>
    <location>
        <position position="188"/>
    </location>
</feature>
<feature type="sequence conflict" description="In Ref. 1; CAH92501." evidence="6" ref="1">
    <original>S</original>
    <variation>P</variation>
    <location>
        <position position="359"/>
    </location>
</feature>
<protein>
    <recommendedName>
        <fullName>Protein NDRG2</fullName>
    </recommendedName>
    <alternativeName>
        <fullName>N-myc downstream-regulated gene 2 protein</fullName>
    </alternativeName>
</protein>
<comment type="function">
    <text evidence="1">Contributes to the regulation of the Wnt signaling pathway. Down-regulates CTNNB1-mediated transcriptional activation of target genes, such as CCND1, and may thereby act as tumor suppressor. May be involved in dendritic cell and neuron differentiation (By similarity).</text>
</comment>
<comment type="subunit">
    <text evidence="1">Interacts with CTNNB1.</text>
</comment>
<comment type="subcellular location">
    <subcellularLocation>
        <location evidence="1">Cytoplasm</location>
    </subcellularLocation>
    <subcellularLocation>
        <location evidence="1">Cytoplasm</location>
        <location evidence="1">Perinuclear region</location>
    </subcellularLocation>
    <subcellularLocation>
        <location evidence="1">Cell projection</location>
        <location evidence="1">Growth cone</location>
    </subcellularLocation>
    <text evidence="1">In neurons, seems to concentrate at axonal growth cone. Perinuclear in neurons (By similarity).</text>
</comment>
<comment type="alternative products">
    <event type="alternative splicing"/>
    <isoform>
        <id>Q5RBN6-1</id>
        <name>1</name>
        <sequence type="displayed"/>
    </isoform>
    <isoform>
        <id>Q5RBN6-2</id>
        <name>2</name>
        <sequence type="described" ref="VSP_019031"/>
    </isoform>
</comment>
<comment type="similarity">
    <text evidence="6">Belongs to the NDRG family.</text>
</comment>
<accession>Q5RBN6</accession>
<accession>Q5R695</accession>
<accession>Q5R6V9</accession>
<name>NDRG2_PONAB</name>